<organism>
    <name type="scientific">Escherichia coli O6:K15:H31 (strain 536 / UPEC)</name>
    <dbReference type="NCBI Taxonomy" id="362663"/>
    <lineage>
        <taxon>Bacteria</taxon>
        <taxon>Pseudomonadati</taxon>
        <taxon>Pseudomonadota</taxon>
        <taxon>Gammaproteobacteria</taxon>
        <taxon>Enterobacterales</taxon>
        <taxon>Enterobacteriaceae</taxon>
        <taxon>Escherichia</taxon>
    </lineage>
</organism>
<sequence length="138" mass="15186">MSGTLLAFDFGTKSIGVAVGQRITGTARPLPAIKAQDGTPDWNIIERLLKEWQPDEIIVGLPLNMDGTEQPLTARARKFANRIHGRFGVEVKLHDERLSTVEARSGLFEQGGYRALNKGKVDSASAVIILESYFEQGY</sequence>
<comment type="function">
    <text evidence="1">Could be a nuclease involved in processing of the 5'-end of pre-16S rRNA.</text>
</comment>
<comment type="subcellular location">
    <subcellularLocation>
        <location evidence="1">Cytoplasm</location>
    </subcellularLocation>
</comment>
<comment type="similarity">
    <text evidence="1">Belongs to the YqgF nuclease family.</text>
</comment>
<reference key="1">
    <citation type="journal article" date="2006" name="Mol. Microbiol.">
        <title>Role of pathogenicity island-associated integrases in the genome plasticity of uropathogenic Escherichia coli strain 536.</title>
        <authorList>
            <person name="Hochhut B."/>
            <person name="Wilde C."/>
            <person name="Balling G."/>
            <person name="Middendorf B."/>
            <person name="Dobrindt U."/>
            <person name="Brzuszkiewicz E."/>
            <person name="Gottschalk G."/>
            <person name="Carniel E."/>
            <person name="Hacker J."/>
        </authorList>
    </citation>
    <scope>NUCLEOTIDE SEQUENCE [LARGE SCALE GENOMIC DNA]</scope>
    <source>
        <strain>536 / UPEC</strain>
    </source>
</reference>
<accession>Q0TDQ2</accession>
<protein>
    <recommendedName>
        <fullName evidence="1">Putative pre-16S rRNA nuclease</fullName>
        <ecNumber evidence="1">3.1.-.-</ecNumber>
    </recommendedName>
</protein>
<dbReference type="EC" id="3.1.-.-" evidence="1"/>
<dbReference type="EMBL" id="CP000247">
    <property type="protein sequence ID" value="ABG70927.1"/>
    <property type="molecule type" value="Genomic_DNA"/>
</dbReference>
<dbReference type="SMR" id="Q0TDQ2"/>
<dbReference type="KEGG" id="ecp:ECP_2943"/>
<dbReference type="HOGENOM" id="CLU_098240_3_0_6"/>
<dbReference type="Proteomes" id="UP000009182">
    <property type="component" value="Chromosome"/>
</dbReference>
<dbReference type="GO" id="GO:0005829">
    <property type="term" value="C:cytosol"/>
    <property type="evidence" value="ECO:0007669"/>
    <property type="project" value="TreeGrafter"/>
</dbReference>
<dbReference type="GO" id="GO:0004518">
    <property type="term" value="F:nuclease activity"/>
    <property type="evidence" value="ECO:0007669"/>
    <property type="project" value="UniProtKB-KW"/>
</dbReference>
<dbReference type="GO" id="GO:0000967">
    <property type="term" value="P:rRNA 5'-end processing"/>
    <property type="evidence" value="ECO:0007669"/>
    <property type="project" value="UniProtKB-UniRule"/>
</dbReference>
<dbReference type="CDD" id="cd16964">
    <property type="entry name" value="YqgF"/>
    <property type="match status" value="1"/>
</dbReference>
<dbReference type="FunFam" id="3.30.420.140:FF:000002">
    <property type="entry name" value="Putative pre-16S rRNA nuclease"/>
    <property type="match status" value="1"/>
</dbReference>
<dbReference type="Gene3D" id="3.30.420.140">
    <property type="entry name" value="YqgF/RNase H-like domain"/>
    <property type="match status" value="1"/>
</dbReference>
<dbReference type="HAMAP" id="MF_00651">
    <property type="entry name" value="Nuclease_YqgF"/>
    <property type="match status" value="1"/>
</dbReference>
<dbReference type="InterPro" id="IPR012337">
    <property type="entry name" value="RNaseH-like_sf"/>
</dbReference>
<dbReference type="InterPro" id="IPR005227">
    <property type="entry name" value="YqgF"/>
</dbReference>
<dbReference type="InterPro" id="IPR006641">
    <property type="entry name" value="YqgF/RNaseH-like_dom"/>
</dbReference>
<dbReference type="InterPro" id="IPR037027">
    <property type="entry name" value="YqgF/RNaseH-like_dom_sf"/>
</dbReference>
<dbReference type="NCBIfam" id="TIGR00250">
    <property type="entry name" value="RNAse_H_YqgF"/>
    <property type="match status" value="1"/>
</dbReference>
<dbReference type="PANTHER" id="PTHR33317">
    <property type="entry name" value="POLYNUCLEOTIDYL TRANSFERASE, RIBONUCLEASE H-LIKE SUPERFAMILY PROTEIN"/>
    <property type="match status" value="1"/>
</dbReference>
<dbReference type="PANTHER" id="PTHR33317:SF4">
    <property type="entry name" value="POLYNUCLEOTIDYL TRANSFERASE, RIBONUCLEASE H-LIKE SUPERFAMILY PROTEIN"/>
    <property type="match status" value="1"/>
</dbReference>
<dbReference type="Pfam" id="PF03652">
    <property type="entry name" value="RuvX"/>
    <property type="match status" value="1"/>
</dbReference>
<dbReference type="SMART" id="SM00732">
    <property type="entry name" value="YqgFc"/>
    <property type="match status" value="1"/>
</dbReference>
<dbReference type="SUPFAM" id="SSF53098">
    <property type="entry name" value="Ribonuclease H-like"/>
    <property type="match status" value="1"/>
</dbReference>
<proteinExistence type="inferred from homology"/>
<keyword id="KW-0963">Cytoplasm</keyword>
<keyword id="KW-0378">Hydrolase</keyword>
<keyword id="KW-0540">Nuclease</keyword>
<keyword id="KW-0690">Ribosome biogenesis</keyword>
<evidence type="ECO:0000255" key="1">
    <source>
        <dbReference type="HAMAP-Rule" id="MF_00651"/>
    </source>
</evidence>
<name>YQGF_ECOL5</name>
<gene>
    <name evidence="1" type="primary">yqgF</name>
    <name type="ordered locus">ECP_2943</name>
</gene>
<feature type="chain" id="PRO_0000257534" description="Putative pre-16S rRNA nuclease">
    <location>
        <begin position="1"/>
        <end position="138"/>
    </location>
</feature>